<feature type="chain" id="PRO_0000144571" description="V-type proton ATPase catalytic subunit A">
    <location>
        <begin position="1"/>
        <end position="610"/>
    </location>
</feature>
<feature type="binding site" evidence="1">
    <location>
        <begin position="245"/>
        <end position="252"/>
    </location>
    <ligand>
        <name>ATP</name>
        <dbReference type="ChEBI" id="CHEBI:30616"/>
    </ligand>
</feature>
<dbReference type="EC" id="7.1.2.2"/>
<dbReference type="EMBL" id="Z25814">
    <property type="protein sequence ID" value="CAA81062.1"/>
    <property type="molecule type" value="mRNA"/>
</dbReference>
<dbReference type="PIR" id="S37049">
    <property type="entry name" value="S37049"/>
</dbReference>
<dbReference type="SMR" id="Q26975"/>
<dbReference type="VEuPathDB" id="TriTrypDB:TcIL3000.A.H_000359700"/>
<dbReference type="VEuPathDB" id="TriTrypDB:TcIL3000_4_700"/>
<dbReference type="GO" id="GO:0033180">
    <property type="term" value="C:proton-transporting V-type ATPase, V1 domain"/>
    <property type="evidence" value="ECO:0007669"/>
    <property type="project" value="InterPro"/>
</dbReference>
<dbReference type="GO" id="GO:0005524">
    <property type="term" value="F:ATP binding"/>
    <property type="evidence" value="ECO:0007669"/>
    <property type="project" value="UniProtKB-KW"/>
</dbReference>
<dbReference type="GO" id="GO:0016887">
    <property type="term" value="F:ATP hydrolysis activity"/>
    <property type="evidence" value="ECO:0007669"/>
    <property type="project" value="InterPro"/>
</dbReference>
<dbReference type="GO" id="GO:0046961">
    <property type="term" value="F:proton-transporting ATPase activity, rotational mechanism"/>
    <property type="evidence" value="ECO:0007669"/>
    <property type="project" value="InterPro"/>
</dbReference>
<dbReference type="GO" id="GO:0046034">
    <property type="term" value="P:ATP metabolic process"/>
    <property type="evidence" value="ECO:0007669"/>
    <property type="project" value="InterPro"/>
</dbReference>
<dbReference type="CDD" id="cd18111">
    <property type="entry name" value="ATP-synt_V_A-type_alpha_C"/>
    <property type="match status" value="1"/>
</dbReference>
<dbReference type="CDD" id="cd18119">
    <property type="entry name" value="ATP-synt_V_A-type_alpha_N"/>
    <property type="match status" value="1"/>
</dbReference>
<dbReference type="CDD" id="cd01134">
    <property type="entry name" value="V_A-ATPase_A"/>
    <property type="match status" value="1"/>
</dbReference>
<dbReference type="FunFam" id="1.10.1140.10:FF:000002">
    <property type="entry name" value="V-type proton ATPase catalytic subunit A"/>
    <property type="match status" value="1"/>
</dbReference>
<dbReference type="FunFam" id="2.40.30.20:FF:000002">
    <property type="entry name" value="V-type proton ATPase catalytic subunit A"/>
    <property type="match status" value="1"/>
</dbReference>
<dbReference type="FunFam" id="2.40.50.100:FF:000008">
    <property type="entry name" value="V-type proton ATPase catalytic subunit A"/>
    <property type="match status" value="1"/>
</dbReference>
<dbReference type="FunFam" id="3.40.50.300:FF:000052">
    <property type="entry name" value="V-type proton ATPase catalytic subunit A"/>
    <property type="match status" value="1"/>
</dbReference>
<dbReference type="Gene3D" id="2.40.30.20">
    <property type="match status" value="1"/>
</dbReference>
<dbReference type="Gene3D" id="2.40.50.100">
    <property type="match status" value="1"/>
</dbReference>
<dbReference type="Gene3D" id="1.10.1140.10">
    <property type="entry name" value="Bovine Mitochondrial F1-atpase, Atp Synthase Beta Chain, Chain D, domain 3"/>
    <property type="match status" value="1"/>
</dbReference>
<dbReference type="Gene3D" id="3.40.50.300">
    <property type="entry name" value="P-loop containing nucleotide triphosphate hydrolases"/>
    <property type="match status" value="1"/>
</dbReference>
<dbReference type="HAMAP" id="MF_00309">
    <property type="entry name" value="ATP_synth_A_arch"/>
    <property type="match status" value="1"/>
</dbReference>
<dbReference type="InterPro" id="IPR055190">
    <property type="entry name" value="ATP-synt_VA_C"/>
</dbReference>
<dbReference type="InterPro" id="IPR031686">
    <property type="entry name" value="ATP-synth_a_Xtn"/>
</dbReference>
<dbReference type="InterPro" id="IPR023366">
    <property type="entry name" value="ATP_synth_asu-like_sf"/>
</dbReference>
<dbReference type="InterPro" id="IPR020003">
    <property type="entry name" value="ATPase_a/bsu_AS"/>
</dbReference>
<dbReference type="InterPro" id="IPR004100">
    <property type="entry name" value="ATPase_F1/V1/A1_a/bsu_N"/>
</dbReference>
<dbReference type="InterPro" id="IPR036121">
    <property type="entry name" value="ATPase_F1/V1/A1_a/bsu_N_sf"/>
</dbReference>
<dbReference type="InterPro" id="IPR000194">
    <property type="entry name" value="ATPase_F1/V1/A1_a/bsu_nucl-bd"/>
</dbReference>
<dbReference type="InterPro" id="IPR024034">
    <property type="entry name" value="ATPase_F1/V1_b/a_C"/>
</dbReference>
<dbReference type="InterPro" id="IPR005725">
    <property type="entry name" value="ATPase_V1-cplx_asu"/>
</dbReference>
<dbReference type="InterPro" id="IPR027417">
    <property type="entry name" value="P-loop_NTPase"/>
</dbReference>
<dbReference type="InterPro" id="IPR022878">
    <property type="entry name" value="V-ATPase_asu"/>
</dbReference>
<dbReference type="NCBIfam" id="NF003220">
    <property type="entry name" value="PRK04192.1"/>
    <property type="match status" value="1"/>
</dbReference>
<dbReference type="NCBIfam" id="TIGR01042">
    <property type="entry name" value="V-ATPase_V1_A"/>
    <property type="match status" value="1"/>
</dbReference>
<dbReference type="PANTHER" id="PTHR43607:SF1">
    <property type="entry name" value="H(+)-TRANSPORTING TWO-SECTOR ATPASE"/>
    <property type="match status" value="1"/>
</dbReference>
<dbReference type="PANTHER" id="PTHR43607">
    <property type="entry name" value="V-TYPE PROTON ATPASE CATALYTIC SUBUNIT A"/>
    <property type="match status" value="1"/>
</dbReference>
<dbReference type="Pfam" id="PF00006">
    <property type="entry name" value="ATP-synt_ab"/>
    <property type="match status" value="1"/>
</dbReference>
<dbReference type="Pfam" id="PF02874">
    <property type="entry name" value="ATP-synt_ab_N"/>
    <property type="match status" value="1"/>
</dbReference>
<dbReference type="Pfam" id="PF16886">
    <property type="entry name" value="ATP-synt_ab_Xtn"/>
    <property type="match status" value="1"/>
</dbReference>
<dbReference type="Pfam" id="PF22919">
    <property type="entry name" value="ATP-synt_VA_C"/>
    <property type="match status" value="1"/>
</dbReference>
<dbReference type="SUPFAM" id="SSF47917">
    <property type="entry name" value="C-terminal domain of alpha and beta subunits of F1 ATP synthase"/>
    <property type="match status" value="1"/>
</dbReference>
<dbReference type="SUPFAM" id="SSF50615">
    <property type="entry name" value="N-terminal domain of alpha and beta subunits of F1 ATP synthase"/>
    <property type="match status" value="1"/>
</dbReference>
<dbReference type="SUPFAM" id="SSF52540">
    <property type="entry name" value="P-loop containing nucleoside triphosphate hydrolases"/>
    <property type="match status" value="1"/>
</dbReference>
<dbReference type="PROSITE" id="PS00152">
    <property type="entry name" value="ATPASE_ALPHA_BETA"/>
    <property type="match status" value="1"/>
</dbReference>
<organism>
    <name type="scientific">Trypanosoma congolense</name>
    <dbReference type="NCBI Taxonomy" id="5692"/>
    <lineage>
        <taxon>Eukaryota</taxon>
        <taxon>Discoba</taxon>
        <taxon>Euglenozoa</taxon>
        <taxon>Kinetoplastea</taxon>
        <taxon>Metakinetoplastina</taxon>
        <taxon>Trypanosomatida</taxon>
        <taxon>Trypanosomatidae</taxon>
        <taxon>Trypanosoma</taxon>
        <taxon>Nannomonas</taxon>
    </lineage>
</organism>
<sequence>MTSDKNPYKTEQRMGAVKAVSGPVVIAENMGGSAMYELVQVGSFRLVGEIIRLEGDTATIQVYEETGGLTVGDPVYCTGKPLSLELGPGIMSEIFDGIQRPLDTIYRMVENVFIPRGVQVKSLNDQKQWDFKPCLKVGDLVSGGDIIGSVVENSLMYNHSIMIPPNVRGRVTSIVPSGNYTLQDDIIELEYNGTVKSLKLMHRWPVRTPRPVASKESGNHPLLTGQRVLDALFPSVQGGTCAIPGAFGCGKTVISQALSKFSNSDAVIYVGCGERGNEMAEVLMDFPTLTTVIDGREESIMKRTCLVANTSNMPVAAREASIYTGITLAEYYRDMGKHIAMMADSTSRWAEALREISGRLAEMPADGGYPAYLSARLASFYERAGRVTCIGGPKREGSVTIVGAVSPPGGDFSDPVTSATLGIVQVFWGLEKRLAQRKHFPSVNWLISYSKYLNALEPFFNTLDPDYMRLRSVAAEILQREEELQEIVQLVGKDSLSESDKIILETAKVIREEFLQQNAFTPYDKYCPPYKTCWMLRNIVAFYEESQRVVAESAGELKITWNYIREMIPHIYTGLTEMKFRDPQEGEEANVEFYRKQNEEIVSAFASLLQ</sequence>
<reference key="1">
    <citation type="submission" date="1993-09" db="EMBL/GenBank/DDBJ databases">
        <authorList>
            <person name="Fish W.R."/>
            <person name="Muriuki C.W."/>
            <person name="Macklin M.D."/>
            <person name="Young J.R."/>
            <person name="Murphy N.B."/>
        </authorList>
    </citation>
    <scope>NUCLEOTIDE SEQUENCE [MRNA]</scope>
    <source>
        <strain>IL3000</strain>
    </source>
</reference>
<evidence type="ECO:0000255" key="1"/>
<evidence type="ECO:0000305" key="2"/>
<proteinExistence type="evidence at transcript level"/>
<name>VATA_TRYCO</name>
<accession>Q26975</accession>
<keyword id="KW-0067">ATP-binding</keyword>
<keyword id="KW-0375">Hydrogen ion transport</keyword>
<keyword id="KW-0406">Ion transport</keyword>
<keyword id="KW-0547">Nucleotide-binding</keyword>
<keyword id="KW-1278">Translocase</keyword>
<keyword id="KW-0813">Transport</keyword>
<protein>
    <recommendedName>
        <fullName>V-type proton ATPase catalytic subunit A</fullName>
        <shortName>V-ATPase subunit A</shortName>
        <ecNumber>7.1.2.2</ecNumber>
    </recommendedName>
    <alternativeName>
        <fullName>V-ATPase 69 kDa subunit</fullName>
    </alternativeName>
    <alternativeName>
        <fullName>Vacuolar proton pump subunit alpha</fullName>
    </alternativeName>
</protein>
<comment type="function">
    <text>Catalytic subunit of the peripheral V1 complex of vacuolar ATPase. V-ATPase vacuolar ATPase is responsible for acidifying a variety of intracellular compartments in eukaryotic cells.</text>
</comment>
<comment type="catalytic activity">
    <reaction>
        <text>ATP + H2O + 4 H(+)(in) = ADP + phosphate + 5 H(+)(out)</text>
        <dbReference type="Rhea" id="RHEA:57720"/>
        <dbReference type="ChEBI" id="CHEBI:15377"/>
        <dbReference type="ChEBI" id="CHEBI:15378"/>
        <dbReference type="ChEBI" id="CHEBI:30616"/>
        <dbReference type="ChEBI" id="CHEBI:43474"/>
        <dbReference type="ChEBI" id="CHEBI:456216"/>
        <dbReference type="EC" id="7.1.2.2"/>
    </reaction>
</comment>
<comment type="subunit">
    <text>V-ATPase is a heteromultimeric enzyme composed of a peripheral catalytic V1 complex (main components: subunits A, B, C, D, E, and F) attached to an integral membrane V0 proton pore complex (main component: the proteolipid protein).</text>
</comment>
<comment type="similarity">
    <text evidence="2">Belongs to the ATPase alpha/beta chains family.</text>
</comment>